<feature type="chain" id="PRO_1000059012" description="Soluble pyridine nucleotide transhydrogenase">
    <location>
        <begin position="1"/>
        <end position="466"/>
    </location>
</feature>
<feature type="binding site" evidence="1">
    <location>
        <begin position="36"/>
        <end position="45"/>
    </location>
    <ligand>
        <name>FAD</name>
        <dbReference type="ChEBI" id="CHEBI:57692"/>
    </ligand>
</feature>
<proteinExistence type="inferred from homology"/>
<organism>
    <name type="scientific">Yersinia pseudotuberculosis serotype O:1b (strain IP 31758)</name>
    <dbReference type="NCBI Taxonomy" id="349747"/>
    <lineage>
        <taxon>Bacteria</taxon>
        <taxon>Pseudomonadati</taxon>
        <taxon>Pseudomonadota</taxon>
        <taxon>Gammaproteobacteria</taxon>
        <taxon>Enterobacterales</taxon>
        <taxon>Yersiniaceae</taxon>
        <taxon>Yersinia</taxon>
    </lineage>
</organism>
<accession>A7FD10</accession>
<comment type="function">
    <text evidence="1">Conversion of NADPH, generated by peripheral catabolic pathways, to NADH, which can enter the respiratory chain for energy generation.</text>
</comment>
<comment type="catalytic activity">
    <reaction evidence="1">
        <text>NAD(+) + NADPH = NADH + NADP(+)</text>
        <dbReference type="Rhea" id="RHEA:11692"/>
        <dbReference type="ChEBI" id="CHEBI:57540"/>
        <dbReference type="ChEBI" id="CHEBI:57783"/>
        <dbReference type="ChEBI" id="CHEBI:57945"/>
        <dbReference type="ChEBI" id="CHEBI:58349"/>
        <dbReference type="EC" id="1.6.1.1"/>
    </reaction>
</comment>
<comment type="cofactor">
    <cofactor evidence="1">
        <name>FAD</name>
        <dbReference type="ChEBI" id="CHEBI:57692"/>
    </cofactor>
    <text evidence="1">Binds 1 FAD per subunit.</text>
</comment>
<comment type="subcellular location">
    <subcellularLocation>
        <location evidence="1">Cytoplasm</location>
    </subcellularLocation>
</comment>
<comment type="similarity">
    <text evidence="1">Belongs to the class-I pyridine nucleotide-disulfide oxidoreductase family.</text>
</comment>
<sequence length="466" mass="51382">MQQHFHFDAIVIGSGPGGEGAAMGLVKQGARVAVIERYNNVGGGCTHWGTIPSKALRHAVSRIIEFNQNPLYSDNARTIKSSFADILNHADRVINQQTRMRQGFYDRNHCHMFSGDASFIDANTVNVRYADGTSDTLQADNIVIATGSRPYRPVNVDFNHERIYDSDTILQLSHEPQHVIIYGAGVIGCEYASIFRGLSVKVDLINTRDRLLAFLDQEMSDALSYHFWNNGVVIRHNEEFEQIEGTTDGVIVHLKSGKKVKADCLLYANGRTGNTSGLGLENIGLEADSRGLLKVNSMYQTALSHVYAVGDVIGYPSLASAAYDQGRIAAQAMIKGEANVHLIEDIPTGIYTIPEISSVGKTEQELTAMKVPYEVGRAQFKHLARAQIVGMDTGSLKILFHRETKQILGIHCFGERAAEIIHIGQAIMEQKGEGNTLEYFVNTTFNYPTMAEAYRVAALNGLNRLF</sequence>
<reference key="1">
    <citation type="journal article" date="2007" name="PLoS Genet.">
        <title>The complete genome sequence of Yersinia pseudotuberculosis IP31758, the causative agent of Far East scarlet-like fever.</title>
        <authorList>
            <person name="Eppinger M."/>
            <person name="Rosovitz M.J."/>
            <person name="Fricke W.F."/>
            <person name="Rasko D.A."/>
            <person name="Kokorina G."/>
            <person name="Fayolle C."/>
            <person name="Lindler L.E."/>
            <person name="Carniel E."/>
            <person name="Ravel J."/>
        </authorList>
    </citation>
    <scope>NUCLEOTIDE SEQUENCE [LARGE SCALE GENOMIC DNA]</scope>
    <source>
        <strain>IP 31758</strain>
    </source>
</reference>
<evidence type="ECO:0000255" key="1">
    <source>
        <dbReference type="HAMAP-Rule" id="MF_00247"/>
    </source>
</evidence>
<dbReference type="EC" id="1.6.1.1" evidence="1"/>
<dbReference type="EMBL" id="CP000720">
    <property type="protein sequence ID" value="ABS46634.1"/>
    <property type="molecule type" value="Genomic_DNA"/>
</dbReference>
<dbReference type="RefSeq" id="WP_002209477.1">
    <property type="nucleotide sequence ID" value="NC_009708.1"/>
</dbReference>
<dbReference type="SMR" id="A7FD10"/>
<dbReference type="GeneID" id="96663600"/>
<dbReference type="KEGG" id="ypi:YpsIP31758_0137"/>
<dbReference type="HOGENOM" id="CLU_016755_0_0_6"/>
<dbReference type="Proteomes" id="UP000002412">
    <property type="component" value="Chromosome"/>
</dbReference>
<dbReference type="GO" id="GO:0005829">
    <property type="term" value="C:cytosol"/>
    <property type="evidence" value="ECO:0007669"/>
    <property type="project" value="TreeGrafter"/>
</dbReference>
<dbReference type="GO" id="GO:0004148">
    <property type="term" value="F:dihydrolipoyl dehydrogenase (NADH) activity"/>
    <property type="evidence" value="ECO:0007669"/>
    <property type="project" value="TreeGrafter"/>
</dbReference>
<dbReference type="GO" id="GO:0050660">
    <property type="term" value="F:flavin adenine dinucleotide binding"/>
    <property type="evidence" value="ECO:0007669"/>
    <property type="project" value="TreeGrafter"/>
</dbReference>
<dbReference type="GO" id="GO:0003957">
    <property type="term" value="F:NAD(P)+ transhydrogenase (Si-specific) activity"/>
    <property type="evidence" value="ECO:0007669"/>
    <property type="project" value="UniProtKB-UniRule"/>
</dbReference>
<dbReference type="GO" id="GO:0006103">
    <property type="term" value="P:2-oxoglutarate metabolic process"/>
    <property type="evidence" value="ECO:0007669"/>
    <property type="project" value="TreeGrafter"/>
</dbReference>
<dbReference type="GO" id="GO:0006739">
    <property type="term" value="P:NADP metabolic process"/>
    <property type="evidence" value="ECO:0007669"/>
    <property type="project" value="UniProtKB-UniRule"/>
</dbReference>
<dbReference type="FunFam" id="3.30.390.30:FF:000002">
    <property type="entry name" value="Soluble pyridine nucleotide transhydrogenase"/>
    <property type="match status" value="1"/>
</dbReference>
<dbReference type="FunFam" id="3.50.50.60:FF:000008">
    <property type="entry name" value="Soluble pyridine nucleotide transhydrogenase"/>
    <property type="match status" value="1"/>
</dbReference>
<dbReference type="Gene3D" id="3.30.390.30">
    <property type="match status" value="1"/>
</dbReference>
<dbReference type="Gene3D" id="3.50.50.60">
    <property type="entry name" value="FAD/NAD(P)-binding domain"/>
    <property type="match status" value="2"/>
</dbReference>
<dbReference type="HAMAP" id="MF_00247">
    <property type="entry name" value="SthA"/>
    <property type="match status" value="1"/>
</dbReference>
<dbReference type="InterPro" id="IPR050151">
    <property type="entry name" value="Class-I_Pyr_Nuc-Dis_Oxidored"/>
</dbReference>
<dbReference type="InterPro" id="IPR036188">
    <property type="entry name" value="FAD/NAD-bd_sf"/>
</dbReference>
<dbReference type="InterPro" id="IPR023753">
    <property type="entry name" value="FAD/NAD-binding_dom"/>
</dbReference>
<dbReference type="InterPro" id="IPR016156">
    <property type="entry name" value="FAD/NAD-linked_Rdtase_dimer_sf"/>
</dbReference>
<dbReference type="InterPro" id="IPR001100">
    <property type="entry name" value="Pyr_nuc-diS_OxRdtase"/>
</dbReference>
<dbReference type="InterPro" id="IPR004099">
    <property type="entry name" value="Pyr_nucl-diS_OxRdtase_dimer"/>
</dbReference>
<dbReference type="InterPro" id="IPR022962">
    <property type="entry name" value="STH_gammaproteobact"/>
</dbReference>
<dbReference type="NCBIfam" id="NF003585">
    <property type="entry name" value="PRK05249.1"/>
    <property type="match status" value="1"/>
</dbReference>
<dbReference type="PANTHER" id="PTHR22912">
    <property type="entry name" value="DISULFIDE OXIDOREDUCTASE"/>
    <property type="match status" value="1"/>
</dbReference>
<dbReference type="PANTHER" id="PTHR22912:SF93">
    <property type="entry name" value="SOLUBLE PYRIDINE NUCLEOTIDE TRANSHYDROGENASE"/>
    <property type="match status" value="1"/>
</dbReference>
<dbReference type="Pfam" id="PF07992">
    <property type="entry name" value="Pyr_redox_2"/>
    <property type="match status" value="1"/>
</dbReference>
<dbReference type="Pfam" id="PF02852">
    <property type="entry name" value="Pyr_redox_dim"/>
    <property type="match status" value="1"/>
</dbReference>
<dbReference type="PIRSF" id="PIRSF000350">
    <property type="entry name" value="Mercury_reductase_MerA"/>
    <property type="match status" value="1"/>
</dbReference>
<dbReference type="PRINTS" id="PR00368">
    <property type="entry name" value="FADPNR"/>
</dbReference>
<dbReference type="PRINTS" id="PR00411">
    <property type="entry name" value="PNDRDTASEI"/>
</dbReference>
<dbReference type="SUPFAM" id="SSF51905">
    <property type="entry name" value="FAD/NAD(P)-binding domain"/>
    <property type="match status" value="1"/>
</dbReference>
<dbReference type="SUPFAM" id="SSF55424">
    <property type="entry name" value="FAD/NAD-linked reductases, dimerisation (C-terminal) domain"/>
    <property type="match status" value="1"/>
</dbReference>
<name>STHA_YERP3</name>
<protein>
    <recommendedName>
        <fullName evidence="1">Soluble pyridine nucleotide transhydrogenase</fullName>
        <shortName evidence="1">STH</shortName>
        <ecNumber evidence="1">1.6.1.1</ecNumber>
    </recommendedName>
    <alternativeName>
        <fullName evidence="1">NAD(P)(+) transhydrogenase [B-specific]</fullName>
    </alternativeName>
</protein>
<gene>
    <name evidence="1" type="primary">sthA</name>
    <name evidence="1" type="synonym">udhA</name>
    <name type="ordered locus">YpsIP31758_0137</name>
</gene>
<keyword id="KW-0963">Cytoplasm</keyword>
<keyword id="KW-0274">FAD</keyword>
<keyword id="KW-0285">Flavoprotein</keyword>
<keyword id="KW-0520">NAD</keyword>
<keyword id="KW-0521">NADP</keyword>
<keyword id="KW-0560">Oxidoreductase</keyword>